<name>IF4A_PHANO</name>
<dbReference type="EC" id="3.6.4.13"/>
<dbReference type="EMBL" id="CH445330">
    <property type="protein sequence ID" value="EAT88438.1"/>
    <property type="molecule type" value="Genomic_DNA"/>
</dbReference>
<dbReference type="RefSeq" id="XP_001795091.1">
    <property type="nucleotide sequence ID" value="XM_001795039.1"/>
</dbReference>
<dbReference type="SMR" id="Q0UU86"/>
<dbReference type="FunCoup" id="Q0UU86">
    <property type="interactions" value="1164"/>
</dbReference>
<dbReference type="STRING" id="321614.Q0UU86"/>
<dbReference type="EnsemblFungi" id="SNOT_04678">
    <property type="protein sequence ID" value="SNOT_04678"/>
    <property type="gene ID" value="SNOG_04678"/>
</dbReference>
<dbReference type="GeneID" id="5971959"/>
<dbReference type="KEGG" id="pno:SNOG_04678"/>
<dbReference type="VEuPathDB" id="FungiDB:JI435_046780"/>
<dbReference type="eggNOG" id="KOG0327">
    <property type="taxonomic scope" value="Eukaryota"/>
</dbReference>
<dbReference type="HOGENOM" id="CLU_003041_1_0_1"/>
<dbReference type="InParanoid" id="Q0UU86"/>
<dbReference type="OMA" id="FGCQALV"/>
<dbReference type="OrthoDB" id="10265785at2759"/>
<dbReference type="Proteomes" id="UP000001055">
    <property type="component" value="Unassembled WGS sequence"/>
</dbReference>
<dbReference type="GO" id="GO:0010494">
    <property type="term" value="C:cytoplasmic stress granule"/>
    <property type="evidence" value="ECO:0000318"/>
    <property type="project" value="GO_Central"/>
</dbReference>
<dbReference type="GO" id="GO:0005524">
    <property type="term" value="F:ATP binding"/>
    <property type="evidence" value="ECO:0007669"/>
    <property type="project" value="UniProtKB-KW"/>
</dbReference>
<dbReference type="GO" id="GO:0016887">
    <property type="term" value="F:ATP hydrolysis activity"/>
    <property type="evidence" value="ECO:0007669"/>
    <property type="project" value="RHEA"/>
</dbReference>
<dbReference type="GO" id="GO:0003723">
    <property type="term" value="F:RNA binding"/>
    <property type="evidence" value="ECO:0007669"/>
    <property type="project" value="UniProtKB-KW"/>
</dbReference>
<dbReference type="GO" id="GO:0003724">
    <property type="term" value="F:RNA helicase activity"/>
    <property type="evidence" value="ECO:0007669"/>
    <property type="project" value="UniProtKB-EC"/>
</dbReference>
<dbReference type="GO" id="GO:0003743">
    <property type="term" value="F:translation initiation factor activity"/>
    <property type="evidence" value="ECO:0000318"/>
    <property type="project" value="GO_Central"/>
</dbReference>
<dbReference type="GO" id="GO:0002183">
    <property type="term" value="P:cytoplasmic translational initiation"/>
    <property type="evidence" value="ECO:0000318"/>
    <property type="project" value="GO_Central"/>
</dbReference>
<dbReference type="CDD" id="cd18046">
    <property type="entry name" value="DEADc_EIF4AII_EIF4AI_DDX2"/>
    <property type="match status" value="1"/>
</dbReference>
<dbReference type="CDD" id="cd18787">
    <property type="entry name" value="SF2_C_DEAD"/>
    <property type="match status" value="1"/>
</dbReference>
<dbReference type="FunFam" id="3.40.50.300:FF:000089">
    <property type="entry name" value="Eukaryotic initiation factor 4A-II"/>
    <property type="match status" value="1"/>
</dbReference>
<dbReference type="FunFam" id="3.40.50.300:FF:000031">
    <property type="entry name" value="Eukaryotic initiation factor 4A-III"/>
    <property type="match status" value="1"/>
</dbReference>
<dbReference type="Gene3D" id="3.40.50.300">
    <property type="entry name" value="P-loop containing nucleotide triphosphate hydrolases"/>
    <property type="match status" value="2"/>
</dbReference>
<dbReference type="InterPro" id="IPR011545">
    <property type="entry name" value="DEAD/DEAH_box_helicase_dom"/>
</dbReference>
<dbReference type="InterPro" id="IPR044728">
    <property type="entry name" value="EIF4A_DEADc"/>
</dbReference>
<dbReference type="InterPro" id="IPR014001">
    <property type="entry name" value="Helicase_ATP-bd"/>
</dbReference>
<dbReference type="InterPro" id="IPR001650">
    <property type="entry name" value="Helicase_C-like"/>
</dbReference>
<dbReference type="InterPro" id="IPR027417">
    <property type="entry name" value="P-loop_NTPase"/>
</dbReference>
<dbReference type="InterPro" id="IPR000629">
    <property type="entry name" value="RNA-helicase_DEAD-box_CS"/>
</dbReference>
<dbReference type="InterPro" id="IPR014014">
    <property type="entry name" value="RNA_helicase_DEAD_Q_motif"/>
</dbReference>
<dbReference type="PANTHER" id="PTHR47958">
    <property type="entry name" value="ATP-DEPENDENT RNA HELICASE DBP3"/>
    <property type="match status" value="1"/>
</dbReference>
<dbReference type="Pfam" id="PF00270">
    <property type="entry name" value="DEAD"/>
    <property type="match status" value="1"/>
</dbReference>
<dbReference type="Pfam" id="PF00271">
    <property type="entry name" value="Helicase_C"/>
    <property type="match status" value="1"/>
</dbReference>
<dbReference type="SMART" id="SM00487">
    <property type="entry name" value="DEXDc"/>
    <property type="match status" value="1"/>
</dbReference>
<dbReference type="SMART" id="SM00490">
    <property type="entry name" value="HELICc"/>
    <property type="match status" value="1"/>
</dbReference>
<dbReference type="SUPFAM" id="SSF52540">
    <property type="entry name" value="P-loop containing nucleoside triphosphate hydrolases"/>
    <property type="match status" value="1"/>
</dbReference>
<dbReference type="PROSITE" id="PS00039">
    <property type="entry name" value="DEAD_ATP_HELICASE"/>
    <property type="match status" value="1"/>
</dbReference>
<dbReference type="PROSITE" id="PS51192">
    <property type="entry name" value="HELICASE_ATP_BIND_1"/>
    <property type="match status" value="1"/>
</dbReference>
<dbReference type="PROSITE" id="PS51194">
    <property type="entry name" value="HELICASE_CTER"/>
    <property type="match status" value="1"/>
</dbReference>
<dbReference type="PROSITE" id="PS51195">
    <property type="entry name" value="Q_MOTIF"/>
    <property type="match status" value="1"/>
</dbReference>
<accession>Q0UU86</accession>
<feature type="chain" id="PRO_0000255984" description="ATP-dependent RNA helicase eIF4A">
    <location>
        <begin position="1"/>
        <end position="396"/>
    </location>
</feature>
<feature type="domain" description="Helicase ATP-binding" evidence="2">
    <location>
        <begin position="54"/>
        <end position="224"/>
    </location>
</feature>
<feature type="domain" description="Helicase C-terminal" evidence="3">
    <location>
        <begin position="235"/>
        <end position="396"/>
    </location>
</feature>
<feature type="region of interest" description="Disordered" evidence="4">
    <location>
        <begin position="1"/>
        <end position="20"/>
    </location>
</feature>
<feature type="short sequence motif" description="Q motif">
    <location>
        <begin position="23"/>
        <end position="51"/>
    </location>
</feature>
<feature type="short sequence motif" description="DEAD box">
    <location>
        <begin position="172"/>
        <end position="175"/>
    </location>
</feature>
<feature type="binding site" evidence="2">
    <location>
        <begin position="67"/>
        <end position="74"/>
    </location>
    <ligand>
        <name>ATP</name>
        <dbReference type="ChEBI" id="CHEBI:30616"/>
    </ligand>
</feature>
<evidence type="ECO:0000250" key="1"/>
<evidence type="ECO:0000255" key="2">
    <source>
        <dbReference type="PROSITE-ProRule" id="PRU00541"/>
    </source>
</evidence>
<evidence type="ECO:0000255" key="3">
    <source>
        <dbReference type="PROSITE-ProRule" id="PRU00542"/>
    </source>
</evidence>
<evidence type="ECO:0000256" key="4">
    <source>
        <dbReference type="SAM" id="MobiDB-lite"/>
    </source>
</evidence>
<evidence type="ECO:0000305" key="5"/>
<reference key="1">
    <citation type="journal article" date="2007" name="Plant Cell">
        <title>Dothideomycete-plant interactions illuminated by genome sequencing and EST analysis of the wheat pathogen Stagonospora nodorum.</title>
        <authorList>
            <person name="Hane J.K."/>
            <person name="Lowe R.G.T."/>
            <person name="Solomon P.S."/>
            <person name="Tan K.-C."/>
            <person name="Schoch C.L."/>
            <person name="Spatafora J.W."/>
            <person name="Crous P.W."/>
            <person name="Kodira C.D."/>
            <person name="Birren B.W."/>
            <person name="Galagan J.E."/>
            <person name="Torriani S.F.F."/>
            <person name="McDonald B.A."/>
            <person name="Oliver R.P."/>
        </authorList>
    </citation>
    <scope>NUCLEOTIDE SEQUENCE [LARGE SCALE GENOMIC DNA]</scope>
    <source>
        <strain>SN15 / ATCC MYA-4574 / FGSC 10173</strain>
    </source>
</reference>
<comment type="function">
    <text evidence="1">ATP-dependent RNA helicase which is a subunit of the eIF4F complex involved in cap recognition and is required for mRNA binding to ribosome. In the current model of translation initiation, eIF4A unwinds RNA secondary structures in the 5'-UTR of mRNAs which is necessary to allow efficient binding of the small ribosomal subunit, and subsequent scanning for the initiator codon (By similarity).</text>
</comment>
<comment type="catalytic activity">
    <reaction>
        <text>ATP + H2O = ADP + phosphate + H(+)</text>
        <dbReference type="Rhea" id="RHEA:13065"/>
        <dbReference type="ChEBI" id="CHEBI:15377"/>
        <dbReference type="ChEBI" id="CHEBI:15378"/>
        <dbReference type="ChEBI" id="CHEBI:30616"/>
        <dbReference type="ChEBI" id="CHEBI:43474"/>
        <dbReference type="ChEBI" id="CHEBI:456216"/>
        <dbReference type="EC" id="3.6.4.13"/>
    </reaction>
</comment>
<comment type="subunit">
    <text evidence="1">Component of the eIF4F complex, which composition varies with external and internal environmental conditions. It is composed of at least eIF4A, eIF4E and eIF4G (By similarity).</text>
</comment>
<comment type="subcellular location">
    <subcellularLocation>
        <location evidence="1">Cytoplasm</location>
    </subcellularLocation>
</comment>
<comment type="domain">
    <text>The Q motif is unique to and characteristic of the DEAD box family of RNA helicases and controls ATP binding and hydrolysis.</text>
</comment>
<comment type="similarity">
    <text evidence="5">Belongs to the DEAD box helicase family. eIF4A subfamily.</text>
</comment>
<protein>
    <recommendedName>
        <fullName>ATP-dependent RNA helicase eIF4A</fullName>
        <ecNumber>3.6.4.13</ecNumber>
    </recommendedName>
    <alternativeName>
        <fullName>Eukaryotic initiation factor 4A</fullName>
        <shortName>eIF-4A</shortName>
    </alternativeName>
    <alternativeName>
        <fullName>Translation initiation factor 1</fullName>
    </alternativeName>
</protein>
<keyword id="KW-0067">ATP-binding</keyword>
<keyword id="KW-0963">Cytoplasm</keyword>
<keyword id="KW-0347">Helicase</keyword>
<keyword id="KW-0378">Hydrolase</keyword>
<keyword id="KW-0396">Initiation factor</keyword>
<keyword id="KW-0547">Nucleotide-binding</keyword>
<keyword id="KW-0648">Protein biosynthesis</keyword>
<keyword id="KW-0694">RNA-binding</keyword>
<sequence>MADKGLEDVPEGQIESNYDETTDSFDAMNLKAELLRGVYAYGFERPSAIQQRAIMPVIKGHDVIAQAQSGTGKTATFSISTLQKIDSNVKACQALILAPTRELAQQIQKVVVAIGDFMDVACHACIGGTSVRDDMKALQDGPQVVVGTPGRVHDMIQRRVLKTDHMKMFVLDEADEMLSRGFTEQIYDIFQLLPQSTQVVLLSATMPQDVLEVTTKFMRDPVRILVKKDELTLEGIKQFYIAVEKEDWKLDTLSDLYETVTITQAVIFCNTRRKVDWLTDKLTARDFTVSAMHGDMDQAQRDVIMKEFRSGSSRVLIATDLLARGIDVQQVSLVINYDLPANRENYIHRIGRGGRFGRKGVAINFVTADDVRMMREIEQFYSTQIEEMPMNVADLI</sequence>
<organism>
    <name type="scientific">Phaeosphaeria nodorum (strain SN15 / ATCC MYA-4574 / FGSC 10173)</name>
    <name type="common">Glume blotch fungus</name>
    <name type="synonym">Parastagonospora nodorum</name>
    <dbReference type="NCBI Taxonomy" id="321614"/>
    <lineage>
        <taxon>Eukaryota</taxon>
        <taxon>Fungi</taxon>
        <taxon>Dikarya</taxon>
        <taxon>Ascomycota</taxon>
        <taxon>Pezizomycotina</taxon>
        <taxon>Dothideomycetes</taxon>
        <taxon>Pleosporomycetidae</taxon>
        <taxon>Pleosporales</taxon>
        <taxon>Pleosporineae</taxon>
        <taxon>Phaeosphaeriaceae</taxon>
        <taxon>Parastagonospora</taxon>
    </lineage>
</organism>
<proteinExistence type="inferred from homology"/>
<gene>
    <name type="primary">TIF1</name>
    <name type="synonym">TIF41</name>
    <name type="ORF">SNOG_04678</name>
</gene>